<name>MMP8_MOUSE</name>
<keyword id="KW-0106">Calcium</keyword>
<keyword id="KW-0177">Collagen degradation</keyword>
<keyword id="KW-1015">Disulfide bond</keyword>
<keyword id="KW-0272">Extracellular matrix</keyword>
<keyword id="KW-0325">Glycoprotein</keyword>
<keyword id="KW-0378">Hydrolase</keyword>
<keyword id="KW-0479">Metal-binding</keyword>
<keyword id="KW-0482">Metalloprotease</keyword>
<keyword id="KW-0645">Protease</keyword>
<keyword id="KW-1185">Reference proteome</keyword>
<keyword id="KW-0677">Repeat</keyword>
<keyword id="KW-0964">Secreted</keyword>
<keyword id="KW-0732">Signal</keyword>
<keyword id="KW-0862">Zinc</keyword>
<keyword id="KW-0865">Zymogen</keyword>
<comment type="function">
    <text>Can degrade fibrillar type I, II, and III collagens. May play a role in the degradation of collagen fibers during uterine involution.</text>
</comment>
<comment type="catalytic activity">
    <reaction>
        <text>Cleavage of interstitial collagens in the triple helical domain. Unlike EC 3.4.24.7, this enzyme cleaves type III collagen more slowly than type I.</text>
        <dbReference type="EC" id="3.4.24.34"/>
    </reaction>
</comment>
<comment type="cofactor">
    <cofactor evidence="1">
        <name>Ca(2+)</name>
        <dbReference type="ChEBI" id="CHEBI:29108"/>
    </cofactor>
    <text evidence="1">Binds 3 Ca(2+) ions per subunit.</text>
</comment>
<comment type="cofactor">
    <cofactor evidence="1">
        <name>Zn(2+)</name>
        <dbReference type="ChEBI" id="CHEBI:29105"/>
    </cofactor>
    <text evidence="1">Binds 2 Zn(2+) ions per subunit.</text>
</comment>
<comment type="activity regulation">
    <text>Cannot be activated without removal of the activation peptide. Activated by matrilysin.</text>
</comment>
<comment type="subcellular location">
    <subcellularLocation>
        <location>Cytoplasmic granule</location>
    </subcellularLocation>
    <subcellularLocation>
        <location>Secreted</location>
        <location>Extracellular space</location>
        <location>Extracellular matrix</location>
    </subcellularLocation>
    <text>Stored in intracellular granules and released during inflammatory conditions.</text>
</comment>
<comment type="tissue specificity">
    <text>Neutrophils. Expressed in uterus. Low levels in kidney and muscle.</text>
</comment>
<comment type="developmental stage">
    <text>Expressed in late embryogenesis and in the involuting postpartum uterus.</text>
</comment>
<comment type="domain">
    <text>The conserved cysteine present in the cysteine-switch motif binds the catalytic zinc ion, thus inhibiting the enzyme. The dissociation of the cysteine from the zinc ion upon the activation-peptide release activates the enzyme.</text>
</comment>
<comment type="similarity">
    <text evidence="4">Belongs to the peptidase M10A family.</text>
</comment>
<gene>
    <name type="primary">Mmp8</name>
</gene>
<organism>
    <name type="scientific">Mus musculus</name>
    <name type="common">Mouse</name>
    <dbReference type="NCBI Taxonomy" id="10090"/>
    <lineage>
        <taxon>Eukaryota</taxon>
        <taxon>Metazoa</taxon>
        <taxon>Chordata</taxon>
        <taxon>Craniata</taxon>
        <taxon>Vertebrata</taxon>
        <taxon>Euteleostomi</taxon>
        <taxon>Mammalia</taxon>
        <taxon>Eutheria</taxon>
        <taxon>Euarchontoglires</taxon>
        <taxon>Glires</taxon>
        <taxon>Rodentia</taxon>
        <taxon>Myomorpha</taxon>
        <taxon>Muroidea</taxon>
        <taxon>Muridae</taxon>
        <taxon>Murinae</taxon>
        <taxon>Mus</taxon>
        <taxon>Mus</taxon>
    </lineage>
</organism>
<evidence type="ECO:0000250" key="1"/>
<evidence type="ECO:0000255" key="2"/>
<evidence type="ECO:0000255" key="3">
    <source>
        <dbReference type="PROSITE-ProRule" id="PRU10095"/>
    </source>
</evidence>
<evidence type="ECO:0000305" key="4"/>
<feature type="signal peptide" evidence="1">
    <location>
        <begin position="1"/>
        <end position="20"/>
    </location>
</feature>
<feature type="propeptide" id="PRO_0000028746" description="Activation peptide">
    <location>
        <begin position="21"/>
        <end position="100"/>
    </location>
</feature>
<feature type="chain" id="PRO_0000028747" description="Neutrophil collagenase">
    <location>
        <begin position="101"/>
        <end position="465"/>
    </location>
</feature>
<feature type="repeat" description="Hemopexin 1">
    <location>
        <begin position="276"/>
        <end position="325"/>
    </location>
</feature>
<feature type="repeat" description="Hemopexin 2">
    <location>
        <begin position="326"/>
        <end position="372"/>
    </location>
</feature>
<feature type="repeat" description="Hemopexin 3">
    <location>
        <begin position="374"/>
        <end position="420"/>
    </location>
</feature>
<feature type="repeat" description="Hemopexin 4">
    <location>
        <begin position="421"/>
        <end position="464"/>
    </location>
</feature>
<feature type="short sequence motif" description="Cysteine switch" evidence="1">
    <location>
        <begin position="89"/>
        <end position="96"/>
    </location>
</feature>
<feature type="active site" evidence="3">
    <location>
        <position position="218"/>
    </location>
</feature>
<feature type="binding site" description="in inhibited form" evidence="1">
    <location>
        <position position="91"/>
    </location>
    <ligand>
        <name>Zn(2+)</name>
        <dbReference type="ChEBI" id="CHEBI:29105"/>
        <label>2</label>
        <note>catalytic</note>
    </ligand>
</feature>
<feature type="binding site" evidence="1">
    <location>
        <position position="157"/>
    </location>
    <ligand>
        <name>Ca(2+)</name>
        <dbReference type="ChEBI" id="CHEBI:29108"/>
        <label>1</label>
    </ligand>
</feature>
<feature type="binding site" evidence="1">
    <location>
        <position position="167"/>
    </location>
    <ligand>
        <name>Zn(2+)</name>
        <dbReference type="ChEBI" id="CHEBI:29105"/>
        <label>1</label>
    </ligand>
</feature>
<feature type="binding site" evidence="1">
    <location>
        <position position="169"/>
    </location>
    <ligand>
        <name>Zn(2+)</name>
        <dbReference type="ChEBI" id="CHEBI:29105"/>
        <label>1</label>
    </ligand>
</feature>
<feature type="binding site" evidence="1">
    <location>
        <position position="174"/>
    </location>
    <ligand>
        <name>Ca(2+)</name>
        <dbReference type="ChEBI" id="CHEBI:29108"/>
        <label>2</label>
    </ligand>
</feature>
<feature type="binding site" evidence="1">
    <location>
        <position position="175"/>
    </location>
    <ligand>
        <name>Ca(2+)</name>
        <dbReference type="ChEBI" id="CHEBI:29108"/>
        <label>2</label>
    </ligand>
</feature>
<feature type="binding site" evidence="1">
    <location>
        <position position="177"/>
    </location>
    <ligand>
        <name>Ca(2+)</name>
        <dbReference type="ChEBI" id="CHEBI:29108"/>
        <label>2</label>
    </ligand>
</feature>
<feature type="binding site" evidence="1">
    <location>
        <position position="179"/>
    </location>
    <ligand>
        <name>Ca(2+)</name>
        <dbReference type="ChEBI" id="CHEBI:29108"/>
        <label>2</label>
    </ligand>
</feature>
<feature type="binding site" evidence="1">
    <location>
        <position position="182"/>
    </location>
    <ligand>
        <name>Zn(2+)</name>
        <dbReference type="ChEBI" id="CHEBI:29105"/>
        <label>1</label>
    </ligand>
</feature>
<feature type="binding site" evidence="1">
    <location>
        <position position="189"/>
    </location>
    <ligand>
        <name>Ca(2+)</name>
        <dbReference type="ChEBI" id="CHEBI:29108"/>
        <label>1</label>
    </ligand>
</feature>
<feature type="binding site" evidence="1">
    <location>
        <position position="191"/>
    </location>
    <ligand>
        <name>Ca(2+)</name>
        <dbReference type="ChEBI" id="CHEBI:29108"/>
        <label>1</label>
    </ligand>
</feature>
<feature type="binding site" evidence="1">
    <location>
        <position position="193"/>
    </location>
    <ligand>
        <name>Ca(2+)</name>
        <dbReference type="ChEBI" id="CHEBI:29108"/>
        <label>1</label>
    </ligand>
</feature>
<feature type="binding site" evidence="1">
    <location>
        <position position="195"/>
    </location>
    <ligand>
        <name>Zn(2+)</name>
        <dbReference type="ChEBI" id="CHEBI:29105"/>
        <label>1</label>
    </ligand>
</feature>
<feature type="binding site" evidence="1">
    <location>
        <position position="197"/>
    </location>
    <ligand>
        <name>Ca(2+)</name>
        <dbReference type="ChEBI" id="CHEBI:29108"/>
        <label>2</label>
    </ligand>
</feature>
<feature type="binding site" evidence="1">
    <location>
        <position position="200"/>
    </location>
    <ligand>
        <name>Ca(2+)</name>
        <dbReference type="ChEBI" id="CHEBI:29108"/>
        <label>2</label>
    </ligand>
</feature>
<feature type="binding site" evidence="1">
    <location>
        <position position="217"/>
    </location>
    <ligand>
        <name>Zn(2+)</name>
        <dbReference type="ChEBI" id="CHEBI:29105"/>
        <label>2</label>
        <note>catalytic</note>
    </ligand>
</feature>
<feature type="binding site" evidence="1">
    <location>
        <position position="221"/>
    </location>
    <ligand>
        <name>Zn(2+)</name>
        <dbReference type="ChEBI" id="CHEBI:29105"/>
        <label>2</label>
        <note>catalytic</note>
    </ligand>
</feature>
<feature type="binding site" evidence="1">
    <location>
        <position position="227"/>
    </location>
    <ligand>
        <name>Zn(2+)</name>
        <dbReference type="ChEBI" id="CHEBI:29105"/>
        <label>2</label>
        <note>catalytic</note>
    </ligand>
</feature>
<feature type="binding site" evidence="1">
    <location>
        <position position="286"/>
    </location>
    <ligand>
        <name>Ca(2+)</name>
        <dbReference type="ChEBI" id="CHEBI:29108"/>
        <label>3</label>
    </ligand>
</feature>
<feature type="binding site" evidence="1">
    <location>
        <position position="378"/>
    </location>
    <ligand>
        <name>Ca(2+)</name>
        <dbReference type="ChEBI" id="CHEBI:29108"/>
        <label>3</label>
    </ligand>
</feature>
<feature type="binding site" evidence="1">
    <location>
        <position position="425"/>
    </location>
    <ligand>
        <name>Ca(2+)</name>
        <dbReference type="ChEBI" id="CHEBI:29108"/>
        <label>3</label>
    </ligand>
</feature>
<feature type="glycosylation site" description="N-linked (GlcNAc...) asparagine" evidence="2">
    <location>
        <position position="55"/>
    </location>
</feature>
<feature type="glycosylation site" description="N-linked (GlcNAc...) asparagine" evidence="2">
    <location>
        <position position="112"/>
    </location>
</feature>
<feature type="disulfide bond" evidence="1">
    <location>
        <begin position="279"/>
        <end position="464"/>
    </location>
</feature>
<feature type="sequence conflict" description="In Ref. 1; AAC12707." evidence="4" ref="1">
    <original>R</original>
    <variation>W</variation>
    <location>
        <position position="116"/>
    </location>
</feature>
<feature type="sequence conflict" description="In Ref. 1; AAC12707." evidence="4" ref="1">
    <original>D</original>
    <variation>E</variation>
    <location>
        <position position="300"/>
    </location>
</feature>
<feature type="sequence conflict" description="In Ref. 1; AAC12707." evidence="4" ref="1">
    <original>F</original>
    <variation>G</variation>
    <location>
        <position position="324"/>
    </location>
</feature>
<feature type="sequence conflict" description="In Ref. 1; AAC12707." evidence="4" ref="1">
    <original>Q</original>
    <variation>E</variation>
    <location>
        <position position="401"/>
    </location>
</feature>
<sequence>MFRLKTLPLLIFLHTQLANAFPVPEHLEEKNIKTAENYLRKFYNLPSNQFRSSRNATMVAEKLKEMQRFFSLAETGKLDAATMGIMEMPRCGVPDSGDFLLTPGSPKWTHTNLTYRIINHTPQLSRAEVKTAIEKAFHVWSVASPLTFTEILQGEADINIAFVSRDHGDNSPFDGPNGILAHAFQPGQGIGGDAHFDSEETWTQDSKNYNLFLVAAHEFGHSLGLSHSTDPGALMYPNYAYREPSTYSLPQDDINGIQTIYGPSDNPIQPTGPSTPKACDPHLRFDATTTLRGEIYFFKDKYFWRRHPQLRTVDLNFISLFWPFLPNGLQAAYEDFDRDLVFLFKGRQYWALSGYDLQQGYPRDISNYGFPRSVQAIDAAVSYNGKTYFFINNQCWRYDNQRRSMDPGYPKSIPSMFPGVNCRVDAVFLQDSFFLFFSGPQYFAFNFVSHRVTRVARSNLWLNCS</sequence>
<accession>O70138</accession>
<accession>O88733</accession>
<accession>Q6GTR5</accession>
<dbReference type="EC" id="3.4.24.34"/>
<dbReference type="EMBL" id="U96696">
    <property type="protein sequence ID" value="AAC12707.1"/>
    <property type="molecule type" value="mRNA"/>
</dbReference>
<dbReference type="EMBL" id="Y13342">
    <property type="protein sequence ID" value="CAA73786.1"/>
    <property type="molecule type" value="mRNA"/>
</dbReference>
<dbReference type="EMBL" id="AK089234">
    <property type="protein sequence ID" value="BAC40805.1"/>
    <property type="molecule type" value="mRNA"/>
</dbReference>
<dbReference type="EMBL" id="AK137468">
    <property type="protein sequence ID" value="BAE23365.1"/>
    <property type="molecule type" value="mRNA"/>
</dbReference>
<dbReference type="EMBL" id="AK154937">
    <property type="protein sequence ID" value="BAE32938.1"/>
    <property type="molecule type" value="mRNA"/>
</dbReference>
<dbReference type="EMBL" id="CH466522">
    <property type="protein sequence ID" value="EDL24937.1"/>
    <property type="molecule type" value="Genomic_DNA"/>
</dbReference>
<dbReference type="EMBL" id="BC042742">
    <property type="protein sequence ID" value="AAH42742.1"/>
    <property type="molecule type" value="mRNA"/>
</dbReference>
<dbReference type="CCDS" id="CCDS22808.1"/>
<dbReference type="RefSeq" id="NP_032637.3">
    <property type="nucleotide sequence ID" value="NM_008611.4"/>
</dbReference>
<dbReference type="SMR" id="O70138"/>
<dbReference type="FunCoup" id="O70138">
    <property type="interactions" value="109"/>
</dbReference>
<dbReference type="STRING" id="10090.ENSMUSP00000018765"/>
<dbReference type="MEROPS" id="M10.002"/>
<dbReference type="GlyCosmos" id="O70138">
    <property type="glycosylation" value="2 sites, No reported glycans"/>
</dbReference>
<dbReference type="GlyGen" id="O70138">
    <property type="glycosylation" value="4 sites, 2 N-linked glycans (2 sites), 1 O-linked glycan (1 site)"/>
</dbReference>
<dbReference type="PhosphoSitePlus" id="O70138"/>
<dbReference type="jPOST" id="O70138"/>
<dbReference type="PaxDb" id="10090-ENSMUSP00000018765"/>
<dbReference type="ProteomicsDB" id="295695"/>
<dbReference type="Antibodypedia" id="18018">
    <property type="antibodies" value="677 antibodies from 40 providers"/>
</dbReference>
<dbReference type="DNASU" id="17394"/>
<dbReference type="Ensembl" id="ENSMUST00000018765.4">
    <property type="protein sequence ID" value="ENSMUSP00000018765.3"/>
    <property type="gene ID" value="ENSMUSG00000005800.4"/>
</dbReference>
<dbReference type="GeneID" id="17394"/>
<dbReference type="KEGG" id="mmu:17394"/>
<dbReference type="UCSC" id="uc009ocr.2">
    <property type="organism name" value="mouse"/>
</dbReference>
<dbReference type="AGR" id="MGI:1202395"/>
<dbReference type="CTD" id="4317"/>
<dbReference type="MGI" id="MGI:1202395">
    <property type="gene designation" value="Mmp8"/>
</dbReference>
<dbReference type="VEuPathDB" id="HostDB:ENSMUSG00000005800"/>
<dbReference type="eggNOG" id="KOG1565">
    <property type="taxonomic scope" value="Eukaryota"/>
</dbReference>
<dbReference type="GeneTree" id="ENSGT00940000161871"/>
<dbReference type="HOGENOM" id="CLU_015489_6_0_1"/>
<dbReference type="InParanoid" id="O70138"/>
<dbReference type="OMA" id="RSNLWLN"/>
<dbReference type="OrthoDB" id="406838at2759"/>
<dbReference type="PhylomeDB" id="O70138"/>
<dbReference type="TreeFam" id="TF315428"/>
<dbReference type="BRENDA" id="3.4.24.34">
    <property type="organism ID" value="3474"/>
</dbReference>
<dbReference type="Reactome" id="R-MMU-1442490">
    <property type="pathway name" value="Collagen degradation"/>
</dbReference>
<dbReference type="Reactome" id="R-MMU-1474228">
    <property type="pathway name" value="Degradation of the extracellular matrix"/>
</dbReference>
<dbReference type="Reactome" id="R-MMU-1592389">
    <property type="pathway name" value="Activation of Matrix Metalloproteinases"/>
</dbReference>
<dbReference type="Reactome" id="R-MMU-6798695">
    <property type="pathway name" value="Neutrophil degranulation"/>
</dbReference>
<dbReference type="BioGRID-ORCS" id="17394">
    <property type="hits" value="3 hits in 78 CRISPR screens"/>
</dbReference>
<dbReference type="ChiTaRS" id="Mmp8">
    <property type="organism name" value="mouse"/>
</dbReference>
<dbReference type="PRO" id="PR:O70138"/>
<dbReference type="Proteomes" id="UP000000589">
    <property type="component" value="Chromosome 9"/>
</dbReference>
<dbReference type="RNAct" id="O70138">
    <property type="molecule type" value="protein"/>
</dbReference>
<dbReference type="Bgee" id="ENSMUSG00000005800">
    <property type="expression patterns" value="Expressed in granulocyte and 75 other cell types or tissues"/>
</dbReference>
<dbReference type="GO" id="GO:0031012">
    <property type="term" value="C:extracellular matrix"/>
    <property type="evidence" value="ECO:0007669"/>
    <property type="project" value="InterPro"/>
</dbReference>
<dbReference type="GO" id="GO:0005615">
    <property type="term" value="C:extracellular space"/>
    <property type="evidence" value="ECO:0007005"/>
    <property type="project" value="BHF-UCL"/>
</dbReference>
<dbReference type="GO" id="GO:0004175">
    <property type="term" value="F:endopeptidase activity"/>
    <property type="evidence" value="ECO:0000315"/>
    <property type="project" value="ARUK-UCL"/>
</dbReference>
<dbReference type="GO" id="GO:0004222">
    <property type="term" value="F:metalloendopeptidase activity"/>
    <property type="evidence" value="ECO:0007669"/>
    <property type="project" value="UniProtKB-EC"/>
</dbReference>
<dbReference type="GO" id="GO:0008233">
    <property type="term" value="F:peptidase activity"/>
    <property type="evidence" value="ECO:0000250"/>
    <property type="project" value="UniProtKB"/>
</dbReference>
<dbReference type="GO" id="GO:0004252">
    <property type="term" value="F:serine-type endopeptidase activity"/>
    <property type="evidence" value="ECO:0000250"/>
    <property type="project" value="UniProtKB"/>
</dbReference>
<dbReference type="GO" id="GO:0043120">
    <property type="term" value="F:tumor necrosis factor binding"/>
    <property type="evidence" value="ECO:0007669"/>
    <property type="project" value="Ensembl"/>
</dbReference>
<dbReference type="GO" id="GO:0008270">
    <property type="term" value="F:zinc ion binding"/>
    <property type="evidence" value="ECO:0007669"/>
    <property type="project" value="InterPro"/>
</dbReference>
<dbReference type="GO" id="GO:0071222">
    <property type="term" value="P:cellular response to lipopolysaccharide"/>
    <property type="evidence" value="ECO:0000315"/>
    <property type="project" value="ARUK-UCL"/>
</dbReference>
<dbReference type="GO" id="GO:0030574">
    <property type="term" value="P:collagen catabolic process"/>
    <property type="evidence" value="ECO:0007669"/>
    <property type="project" value="UniProtKB-KW"/>
</dbReference>
<dbReference type="GO" id="GO:0035987">
    <property type="term" value="P:endodermal cell differentiation"/>
    <property type="evidence" value="ECO:0007669"/>
    <property type="project" value="Ensembl"/>
</dbReference>
<dbReference type="GO" id="GO:1903980">
    <property type="term" value="P:positive regulation of microglial cell activation"/>
    <property type="evidence" value="ECO:0000315"/>
    <property type="project" value="ARUK-UCL"/>
</dbReference>
<dbReference type="GO" id="GO:0150078">
    <property type="term" value="P:positive regulation of neuroinflammatory response"/>
    <property type="evidence" value="ECO:0000315"/>
    <property type="project" value="ARUK-UCL"/>
</dbReference>
<dbReference type="GO" id="GO:0032760">
    <property type="term" value="P:positive regulation of tumor necrosis factor production"/>
    <property type="evidence" value="ECO:0000315"/>
    <property type="project" value="ARUK-UCL"/>
</dbReference>
<dbReference type="GO" id="GO:1903265">
    <property type="term" value="P:positive regulation of tumor necrosis factor-mediated signaling pathway"/>
    <property type="evidence" value="ECO:0000315"/>
    <property type="project" value="ARUK-UCL"/>
</dbReference>
<dbReference type="GO" id="GO:0006508">
    <property type="term" value="P:proteolysis"/>
    <property type="evidence" value="ECO:0000250"/>
    <property type="project" value="UniProtKB"/>
</dbReference>
<dbReference type="CDD" id="cd00094">
    <property type="entry name" value="HX"/>
    <property type="match status" value="1"/>
</dbReference>
<dbReference type="CDD" id="cd04278">
    <property type="entry name" value="ZnMc_MMP"/>
    <property type="match status" value="1"/>
</dbReference>
<dbReference type="FunFam" id="3.40.390.10:FF:000007">
    <property type="entry name" value="Collagenase 3"/>
    <property type="match status" value="1"/>
</dbReference>
<dbReference type="FunFam" id="2.110.10.10:FF:000002">
    <property type="entry name" value="Matrix metallopeptidase 3"/>
    <property type="match status" value="1"/>
</dbReference>
<dbReference type="Gene3D" id="3.40.390.10">
    <property type="entry name" value="Collagenase (Catalytic Domain)"/>
    <property type="match status" value="1"/>
</dbReference>
<dbReference type="Gene3D" id="2.110.10.10">
    <property type="entry name" value="Hemopexin-like domain"/>
    <property type="match status" value="1"/>
</dbReference>
<dbReference type="InterPro" id="IPR000585">
    <property type="entry name" value="Hemopexin-like_dom"/>
</dbReference>
<dbReference type="InterPro" id="IPR036375">
    <property type="entry name" value="Hemopexin-like_dom_sf"/>
</dbReference>
<dbReference type="InterPro" id="IPR018487">
    <property type="entry name" value="Hemopexin-like_repeat"/>
</dbReference>
<dbReference type="InterPro" id="IPR018486">
    <property type="entry name" value="Hemopexin_CS"/>
</dbReference>
<dbReference type="InterPro" id="IPR033739">
    <property type="entry name" value="M10A_MMP"/>
</dbReference>
<dbReference type="InterPro" id="IPR024079">
    <property type="entry name" value="MetalloPept_cat_dom_sf"/>
</dbReference>
<dbReference type="InterPro" id="IPR001818">
    <property type="entry name" value="Pept_M10_metallopeptidase"/>
</dbReference>
<dbReference type="InterPro" id="IPR021190">
    <property type="entry name" value="Pept_M10A"/>
</dbReference>
<dbReference type="InterPro" id="IPR021158">
    <property type="entry name" value="Pept_M10A_Zn_BS"/>
</dbReference>
<dbReference type="InterPro" id="IPR006026">
    <property type="entry name" value="Peptidase_Metallo"/>
</dbReference>
<dbReference type="InterPro" id="IPR002477">
    <property type="entry name" value="Peptidoglycan-bd-like"/>
</dbReference>
<dbReference type="InterPro" id="IPR036365">
    <property type="entry name" value="PGBD-like_sf"/>
</dbReference>
<dbReference type="PANTHER" id="PTHR10201">
    <property type="entry name" value="MATRIX METALLOPROTEINASE"/>
    <property type="match status" value="1"/>
</dbReference>
<dbReference type="PANTHER" id="PTHR10201:SF137">
    <property type="entry name" value="NEUTROPHIL COLLAGENASE"/>
    <property type="match status" value="1"/>
</dbReference>
<dbReference type="Pfam" id="PF00045">
    <property type="entry name" value="Hemopexin"/>
    <property type="match status" value="4"/>
</dbReference>
<dbReference type="Pfam" id="PF00413">
    <property type="entry name" value="Peptidase_M10"/>
    <property type="match status" value="1"/>
</dbReference>
<dbReference type="Pfam" id="PF01471">
    <property type="entry name" value="PG_binding_1"/>
    <property type="match status" value="1"/>
</dbReference>
<dbReference type="PIRSF" id="PIRSF001191">
    <property type="entry name" value="Peptidase_M10A_matrix"/>
    <property type="match status" value="1"/>
</dbReference>
<dbReference type="PRINTS" id="PR00138">
    <property type="entry name" value="MATRIXIN"/>
</dbReference>
<dbReference type="SMART" id="SM00120">
    <property type="entry name" value="HX"/>
    <property type="match status" value="4"/>
</dbReference>
<dbReference type="SMART" id="SM00235">
    <property type="entry name" value="ZnMc"/>
    <property type="match status" value="1"/>
</dbReference>
<dbReference type="SUPFAM" id="SSF50923">
    <property type="entry name" value="Hemopexin-like domain"/>
    <property type="match status" value="1"/>
</dbReference>
<dbReference type="SUPFAM" id="SSF55486">
    <property type="entry name" value="Metalloproteases ('zincins'), catalytic domain"/>
    <property type="match status" value="1"/>
</dbReference>
<dbReference type="SUPFAM" id="SSF47090">
    <property type="entry name" value="PGBD-like"/>
    <property type="match status" value="1"/>
</dbReference>
<dbReference type="PROSITE" id="PS00546">
    <property type="entry name" value="CYSTEINE_SWITCH"/>
    <property type="match status" value="1"/>
</dbReference>
<dbReference type="PROSITE" id="PS00024">
    <property type="entry name" value="HEMOPEXIN"/>
    <property type="match status" value="1"/>
</dbReference>
<dbReference type="PROSITE" id="PS51642">
    <property type="entry name" value="HEMOPEXIN_2"/>
    <property type="match status" value="4"/>
</dbReference>
<dbReference type="PROSITE" id="PS00142">
    <property type="entry name" value="ZINC_PROTEASE"/>
    <property type="match status" value="1"/>
</dbReference>
<reference key="1">
    <citation type="journal article" date="1998" name="Blood">
        <title>Isolation and characterization of the cDNA for mouse neutrophil collagenase: demonstration of shared negative regulatory pathways for neutrophil secondary granule protein gene expression.</title>
        <authorList>
            <person name="Lawson N.D."/>
            <person name="Khanna-Gupta A."/>
            <person name="Berliner N."/>
        </authorList>
    </citation>
    <scope>NUCLEOTIDE SEQUENCE [MRNA]</scope>
</reference>
<reference key="2">
    <citation type="journal article" date="1998" name="J. Biol. Chem.">
        <title>Collagenase 2 (MMP-8) expression in murine tissue-remodelling processes. Analysis of its potential role in postpartum involution of the uterus.</title>
        <authorList>
            <person name="Balbin M."/>
            <person name="Fueyo A."/>
            <person name="Knaeuper V."/>
            <person name="Pendas A.M."/>
            <person name="Lopez J.M."/>
            <person name="Jimenez M.G."/>
            <person name="Murphy G."/>
            <person name="Lopez-Otin C."/>
        </authorList>
    </citation>
    <scope>NUCLEOTIDE SEQUENCE [MRNA]</scope>
    <source>
        <strain>129/Sv</strain>
        <tissue>Embryo</tissue>
    </source>
</reference>
<reference key="3">
    <citation type="journal article" date="2005" name="Science">
        <title>The transcriptional landscape of the mammalian genome.</title>
        <authorList>
            <person name="Carninci P."/>
            <person name="Kasukawa T."/>
            <person name="Katayama S."/>
            <person name="Gough J."/>
            <person name="Frith M.C."/>
            <person name="Maeda N."/>
            <person name="Oyama R."/>
            <person name="Ravasi T."/>
            <person name="Lenhard B."/>
            <person name="Wells C."/>
            <person name="Kodzius R."/>
            <person name="Shimokawa K."/>
            <person name="Bajic V.B."/>
            <person name="Brenner S.E."/>
            <person name="Batalov S."/>
            <person name="Forrest A.R."/>
            <person name="Zavolan M."/>
            <person name="Davis M.J."/>
            <person name="Wilming L.G."/>
            <person name="Aidinis V."/>
            <person name="Allen J.E."/>
            <person name="Ambesi-Impiombato A."/>
            <person name="Apweiler R."/>
            <person name="Aturaliya R.N."/>
            <person name="Bailey T.L."/>
            <person name="Bansal M."/>
            <person name="Baxter L."/>
            <person name="Beisel K.W."/>
            <person name="Bersano T."/>
            <person name="Bono H."/>
            <person name="Chalk A.M."/>
            <person name="Chiu K.P."/>
            <person name="Choudhary V."/>
            <person name="Christoffels A."/>
            <person name="Clutterbuck D.R."/>
            <person name="Crowe M.L."/>
            <person name="Dalla E."/>
            <person name="Dalrymple B.P."/>
            <person name="de Bono B."/>
            <person name="Della Gatta G."/>
            <person name="di Bernardo D."/>
            <person name="Down T."/>
            <person name="Engstrom P."/>
            <person name="Fagiolini M."/>
            <person name="Faulkner G."/>
            <person name="Fletcher C.F."/>
            <person name="Fukushima T."/>
            <person name="Furuno M."/>
            <person name="Futaki S."/>
            <person name="Gariboldi M."/>
            <person name="Georgii-Hemming P."/>
            <person name="Gingeras T.R."/>
            <person name="Gojobori T."/>
            <person name="Green R.E."/>
            <person name="Gustincich S."/>
            <person name="Harbers M."/>
            <person name="Hayashi Y."/>
            <person name="Hensch T.K."/>
            <person name="Hirokawa N."/>
            <person name="Hill D."/>
            <person name="Huminiecki L."/>
            <person name="Iacono M."/>
            <person name="Ikeo K."/>
            <person name="Iwama A."/>
            <person name="Ishikawa T."/>
            <person name="Jakt M."/>
            <person name="Kanapin A."/>
            <person name="Katoh M."/>
            <person name="Kawasawa Y."/>
            <person name="Kelso J."/>
            <person name="Kitamura H."/>
            <person name="Kitano H."/>
            <person name="Kollias G."/>
            <person name="Krishnan S.P."/>
            <person name="Kruger A."/>
            <person name="Kummerfeld S.K."/>
            <person name="Kurochkin I.V."/>
            <person name="Lareau L.F."/>
            <person name="Lazarevic D."/>
            <person name="Lipovich L."/>
            <person name="Liu J."/>
            <person name="Liuni S."/>
            <person name="McWilliam S."/>
            <person name="Madan Babu M."/>
            <person name="Madera M."/>
            <person name="Marchionni L."/>
            <person name="Matsuda H."/>
            <person name="Matsuzawa S."/>
            <person name="Miki H."/>
            <person name="Mignone F."/>
            <person name="Miyake S."/>
            <person name="Morris K."/>
            <person name="Mottagui-Tabar S."/>
            <person name="Mulder N."/>
            <person name="Nakano N."/>
            <person name="Nakauchi H."/>
            <person name="Ng P."/>
            <person name="Nilsson R."/>
            <person name="Nishiguchi S."/>
            <person name="Nishikawa S."/>
            <person name="Nori F."/>
            <person name="Ohara O."/>
            <person name="Okazaki Y."/>
            <person name="Orlando V."/>
            <person name="Pang K.C."/>
            <person name="Pavan W.J."/>
            <person name="Pavesi G."/>
            <person name="Pesole G."/>
            <person name="Petrovsky N."/>
            <person name="Piazza S."/>
            <person name="Reed J."/>
            <person name="Reid J.F."/>
            <person name="Ring B.Z."/>
            <person name="Ringwald M."/>
            <person name="Rost B."/>
            <person name="Ruan Y."/>
            <person name="Salzberg S.L."/>
            <person name="Sandelin A."/>
            <person name="Schneider C."/>
            <person name="Schoenbach C."/>
            <person name="Sekiguchi K."/>
            <person name="Semple C.A."/>
            <person name="Seno S."/>
            <person name="Sessa L."/>
            <person name="Sheng Y."/>
            <person name="Shibata Y."/>
            <person name="Shimada H."/>
            <person name="Shimada K."/>
            <person name="Silva D."/>
            <person name="Sinclair B."/>
            <person name="Sperling S."/>
            <person name="Stupka E."/>
            <person name="Sugiura K."/>
            <person name="Sultana R."/>
            <person name="Takenaka Y."/>
            <person name="Taki K."/>
            <person name="Tammoja K."/>
            <person name="Tan S.L."/>
            <person name="Tang S."/>
            <person name="Taylor M.S."/>
            <person name="Tegner J."/>
            <person name="Teichmann S.A."/>
            <person name="Ueda H.R."/>
            <person name="van Nimwegen E."/>
            <person name="Verardo R."/>
            <person name="Wei C.L."/>
            <person name="Yagi K."/>
            <person name="Yamanishi H."/>
            <person name="Zabarovsky E."/>
            <person name="Zhu S."/>
            <person name="Zimmer A."/>
            <person name="Hide W."/>
            <person name="Bult C."/>
            <person name="Grimmond S.M."/>
            <person name="Teasdale R.D."/>
            <person name="Liu E.T."/>
            <person name="Brusic V."/>
            <person name="Quackenbush J."/>
            <person name="Wahlestedt C."/>
            <person name="Mattick J.S."/>
            <person name="Hume D.A."/>
            <person name="Kai C."/>
            <person name="Sasaki D."/>
            <person name="Tomaru Y."/>
            <person name="Fukuda S."/>
            <person name="Kanamori-Katayama M."/>
            <person name="Suzuki M."/>
            <person name="Aoki J."/>
            <person name="Arakawa T."/>
            <person name="Iida J."/>
            <person name="Imamura K."/>
            <person name="Itoh M."/>
            <person name="Kato T."/>
            <person name="Kawaji H."/>
            <person name="Kawagashira N."/>
            <person name="Kawashima T."/>
            <person name="Kojima M."/>
            <person name="Kondo S."/>
            <person name="Konno H."/>
            <person name="Nakano K."/>
            <person name="Ninomiya N."/>
            <person name="Nishio T."/>
            <person name="Okada M."/>
            <person name="Plessy C."/>
            <person name="Shibata K."/>
            <person name="Shiraki T."/>
            <person name="Suzuki S."/>
            <person name="Tagami M."/>
            <person name="Waki K."/>
            <person name="Watahiki A."/>
            <person name="Okamura-Oho Y."/>
            <person name="Suzuki H."/>
            <person name="Kawai J."/>
            <person name="Hayashizaki Y."/>
        </authorList>
    </citation>
    <scope>NUCLEOTIDE SEQUENCE [LARGE SCALE MRNA]</scope>
    <source>
        <strain>C57BL/6J</strain>
        <strain>NOD</strain>
        <tissue>Bone</tissue>
        <tissue>Dendritic cell</tissue>
    </source>
</reference>
<reference key="4">
    <citation type="submission" date="2005-07" db="EMBL/GenBank/DDBJ databases">
        <authorList>
            <person name="Mural R.J."/>
            <person name="Adams M.D."/>
            <person name="Myers E.W."/>
            <person name="Smith H.O."/>
            <person name="Venter J.C."/>
        </authorList>
    </citation>
    <scope>NUCLEOTIDE SEQUENCE [LARGE SCALE GENOMIC DNA]</scope>
</reference>
<reference key="5">
    <citation type="journal article" date="2004" name="Genome Res.">
        <title>The status, quality, and expansion of the NIH full-length cDNA project: the Mammalian Gene Collection (MGC).</title>
        <authorList>
            <consortium name="The MGC Project Team"/>
        </authorList>
    </citation>
    <scope>NUCLEOTIDE SEQUENCE [LARGE SCALE MRNA]</scope>
    <source>
        <strain>129</strain>
        <tissue>Mammary tumor</tissue>
    </source>
</reference>
<protein>
    <recommendedName>
        <fullName>Neutrophil collagenase</fullName>
        <ecNumber>3.4.24.34</ecNumber>
    </recommendedName>
    <alternativeName>
        <fullName>Collagenase 2</fullName>
    </alternativeName>
    <alternativeName>
        <fullName>Matrix metalloproteinase-8</fullName>
        <shortName>MMP-8</shortName>
    </alternativeName>
</protein>
<proteinExistence type="evidence at transcript level"/>